<dbReference type="EMBL" id="CP000143">
    <property type="protein sequence ID" value="ABA78967.1"/>
    <property type="molecule type" value="Genomic_DNA"/>
</dbReference>
<dbReference type="RefSeq" id="WP_002719962.1">
    <property type="nucleotide sequence ID" value="NZ_CP030271.1"/>
</dbReference>
<dbReference type="RefSeq" id="YP_352868.1">
    <property type="nucleotide sequence ID" value="NC_007493.2"/>
</dbReference>
<dbReference type="SMR" id="Q3J2L7"/>
<dbReference type="STRING" id="272943.RSP_2843"/>
<dbReference type="EnsemblBacteria" id="ABA78967">
    <property type="protein sequence ID" value="ABA78967"/>
    <property type="gene ID" value="RSP_2843"/>
</dbReference>
<dbReference type="GeneID" id="67446545"/>
<dbReference type="KEGG" id="rsp:RSP_2843"/>
<dbReference type="PATRIC" id="fig|272943.9.peg.1736"/>
<dbReference type="eggNOG" id="COG1923">
    <property type="taxonomic scope" value="Bacteria"/>
</dbReference>
<dbReference type="OrthoDB" id="9799751at2"/>
<dbReference type="PhylomeDB" id="Q3J2L7"/>
<dbReference type="Proteomes" id="UP000002703">
    <property type="component" value="Chromosome 1"/>
</dbReference>
<dbReference type="GO" id="GO:0005829">
    <property type="term" value="C:cytosol"/>
    <property type="evidence" value="ECO:0007669"/>
    <property type="project" value="TreeGrafter"/>
</dbReference>
<dbReference type="GO" id="GO:0003723">
    <property type="term" value="F:RNA binding"/>
    <property type="evidence" value="ECO:0007669"/>
    <property type="project" value="UniProtKB-UniRule"/>
</dbReference>
<dbReference type="GO" id="GO:0006355">
    <property type="term" value="P:regulation of DNA-templated transcription"/>
    <property type="evidence" value="ECO:0007669"/>
    <property type="project" value="InterPro"/>
</dbReference>
<dbReference type="GO" id="GO:0043487">
    <property type="term" value="P:regulation of RNA stability"/>
    <property type="evidence" value="ECO:0007669"/>
    <property type="project" value="TreeGrafter"/>
</dbReference>
<dbReference type="GO" id="GO:0045974">
    <property type="term" value="P:regulation of translation, ncRNA-mediated"/>
    <property type="evidence" value="ECO:0007669"/>
    <property type="project" value="TreeGrafter"/>
</dbReference>
<dbReference type="CDD" id="cd01716">
    <property type="entry name" value="Hfq"/>
    <property type="match status" value="1"/>
</dbReference>
<dbReference type="FunFam" id="2.30.30.100:FF:000001">
    <property type="entry name" value="RNA-binding protein Hfq"/>
    <property type="match status" value="1"/>
</dbReference>
<dbReference type="Gene3D" id="2.30.30.100">
    <property type="match status" value="1"/>
</dbReference>
<dbReference type="HAMAP" id="MF_00436">
    <property type="entry name" value="Hfq"/>
    <property type="match status" value="1"/>
</dbReference>
<dbReference type="InterPro" id="IPR005001">
    <property type="entry name" value="Hfq"/>
</dbReference>
<dbReference type="InterPro" id="IPR010920">
    <property type="entry name" value="LSM_dom_sf"/>
</dbReference>
<dbReference type="InterPro" id="IPR047575">
    <property type="entry name" value="Sm"/>
</dbReference>
<dbReference type="NCBIfam" id="TIGR02383">
    <property type="entry name" value="Hfq"/>
    <property type="match status" value="1"/>
</dbReference>
<dbReference type="NCBIfam" id="NF001602">
    <property type="entry name" value="PRK00395.1"/>
    <property type="match status" value="1"/>
</dbReference>
<dbReference type="PANTHER" id="PTHR34772">
    <property type="entry name" value="RNA-BINDING PROTEIN HFQ"/>
    <property type="match status" value="1"/>
</dbReference>
<dbReference type="PANTHER" id="PTHR34772:SF1">
    <property type="entry name" value="RNA-BINDING PROTEIN HFQ"/>
    <property type="match status" value="1"/>
</dbReference>
<dbReference type="Pfam" id="PF17209">
    <property type="entry name" value="Hfq"/>
    <property type="match status" value="1"/>
</dbReference>
<dbReference type="SUPFAM" id="SSF50182">
    <property type="entry name" value="Sm-like ribonucleoproteins"/>
    <property type="match status" value="1"/>
</dbReference>
<dbReference type="PROSITE" id="PS52002">
    <property type="entry name" value="SM"/>
    <property type="match status" value="1"/>
</dbReference>
<evidence type="ECO:0000255" key="1">
    <source>
        <dbReference type="HAMAP-Rule" id="MF_00436"/>
    </source>
</evidence>
<evidence type="ECO:0000255" key="2">
    <source>
        <dbReference type="PROSITE-ProRule" id="PRU01346"/>
    </source>
</evidence>
<keyword id="KW-1185">Reference proteome</keyword>
<keyword id="KW-0694">RNA-binding</keyword>
<keyword id="KW-0346">Stress response</keyword>
<name>HFQ_CERS4</name>
<organism>
    <name type="scientific">Cereibacter sphaeroides (strain ATCC 17023 / DSM 158 / JCM 6121 / CCUG 31486 / LMG 2827 / NBRC 12203 / NCIMB 8253 / ATH 2.4.1.)</name>
    <name type="common">Rhodobacter sphaeroides</name>
    <dbReference type="NCBI Taxonomy" id="272943"/>
    <lineage>
        <taxon>Bacteria</taxon>
        <taxon>Pseudomonadati</taxon>
        <taxon>Pseudomonadota</taxon>
        <taxon>Alphaproteobacteria</taxon>
        <taxon>Rhodobacterales</taxon>
        <taxon>Paracoccaceae</taxon>
        <taxon>Cereibacter</taxon>
    </lineage>
</organism>
<sequence>MAADKQNLQDAFLNHVRKAKVPVTIFLINGVKLQGVITWFDNFCVLLRRDGQSQLVYKHAISTIMPGQPINLYEGDD</sequence>
<reference key="1">
    <citation type="submission" date="2005-09" db="EMBL/GenBank/DDBJ databases">
        <title>Complete sequence of chromosome 1 of Rhodobacter sphaeroides 2.4.1.</title>
        <authorList>
            <person name="Copeland A."/>
            <person name="Lucas S."/>
            <person name="Lapidus A."/>
            <person name="Barry K."/>
            <person name="Detter J.C."/>
            <person name="Glavina T."/>
            <person name="Hammon N."/>
            <person name="Israni S."/>
            <person name="Pitluck S."/>
            <person name="Richardson P."/>
            <person name="Mackenzie C."/>
            <person name="Choudhary M."/>
            <person name="Larimer F."/>
            <person name="Hauser L.J."/>
            <person name="Land M."/>
            <person name="Donohue T.J."/>
            <person name="Kaplan S."/>
        </authorList>
    </citation>
    <scope>NUCLEOTIDE SEQUENCE [LARGE SCALE GENOMIC DNA]</scope>
    <source>
        <strain>ATCC 17023 / DSM 158 / JCM 6121 / CCUG 31486 / LMG 2827 / NBRC 12203 / NCIMB 8253 / ATH 2.4.1.</strain>
    </source>
</reference>
<accession>Q3J2L7</accession>
<feature type="chain" id="PRO_1000080684" description="RNA-binding protein Hfq">
    <location>
        <begin position="1"/>
        <end position="77"/>
    </location>
</feature>
<feature type="domain" description="Sm" evidence="2">
    <location>
        <begin position="10"/>
        <end position="70"/>
    </location>
</feature>
<proteinExistence type="inferred from homology"/>
<protein>
    <recommendedName>
        <fullName evidence="1">RNA-binding protein Hfq</fullName>
    </recommendedName>
</protein>
<gene>
    <name evidence="1" type="primary">hfq</name>
    <name type="ordered locus">RHOS4_13990</name>
    <name type="ORF">RSP_2843</name>
</gene>
<comment type="function">
    <text evidence="1">RNA chaperone that binds small regulatory RNA (sRNAs) and mRNAs to facilitate mRNA translational regulation in response to envelope stress, environmental stress and changes in metabolite concentrations. Also binds with high specificity to tRNAs.</text>
</comment>
<comment type="subunit">
    <text evidence="1">Homohexamer.</text>
</comment>
<comment type="similarity">
    <text evidence="1">Belongs to the Hfq family.</text>
</comment>